<sequence>MLVLFVATWSDLGLCKKRPKPGGWNTGGSRYPGQGSPGGNRYPPQGGGGWGQPHGGGWGQPHGGGWGQPHGGGWGQGGGTHNQWHKPSKPKTSMKHMAGAAAAGAVVGGLGGYMLGSAMSRPLIHFGNDYEDRYYRENMYRYPNQVYYRPVDQYSNQNNFVHDCVNITIKQHTVTTTTKGENFTETDVKMMERVVEQMCITQYQKESQAYYQRGSSIVLFSSPPVILLISFLIFLIVG</sequence>
<protein>
    <recommendedName>
        <fullName>Major prion protein</fullName>
        <shortName>PrP</shortName>
    </recommendedName>
    <alternativeName>
        <fullName>PrP27-30</fullName>
    </alternativeName>
    <alternativeName>
        <fullName>PrP33-35C</fullName>
    </alternativeName>
    <cdAntigenName>CD230</cdAntigenName>
</protein>
<organism>
    <name type="scientific">Theropithecus gelada</name>
    <name type="common">Gelada baboon</name>
    <dbReference type="NCBI Taxonomy" id="9565"/>
    <lineage>
        <taxon>Eukaryota</taxon>
        <taxon>Metazoa</taxon>
        <taxon>Chordata</taxon>
        <taxon>Craniata</taxon>
        <taxon>Vertebrata</taxon>
        <taxon>Euteleostomi</taxon>
        <taxon>Mammalia</taxon>
        <taxon>Eutheria</taxon>
        <taxon>Euarchontoglires</taxon>
        <taxon>Primates</taxon>
        <taxon>Haplorrhini</taxon>
        <taxon>Catarrhini</taxon>
        <taxon>Cercopithecidae</taxon>
        <taxon>Cercopithecinae</taxon>
        <taxon>Theropithecus</taxon>
    </lineage>
</organism>
<proteinExistence type="inferred from homology"/>
<keyword id="KW-0034">Amyloid</keyword>
<keyword id="KW-1003">Cell membrane</keyword>
<keyword id="KW-0186">Copper</keyword>
<keyword id="KW-1015">Disulfide bond</keyword>
<keyword id="KW-0325">Glycoprotein</keyword>
<keyword id="KW-0333">Golgi apparatus</keyword>
<keyword id="KW-0336">GPI-anchor</keyword>
<keyword id="KW-0449">Lipoprotein</keyword>
<keyword id="KW-0472">Membrane</keyword>
<keyword id="KW-0479">Metal-binding</keyword>
<keyword id="KW-0640">Prion</keyword>
<keyword id="KW-1185">Reference proteome</keyword>
<keyword id="KW-0677">Repeat</keyword>
<keyword id="KW-0732">Signal</keyword>
<keyword id="KW-0862">Zinc</keyword>
<name>PRIO_THEGE</name>
<dbReference type="EMBL" id="U75383">
    <property type="protein sequence ID" value="AAB50630.1"/>
    <property type="molecule type" value="Genomic_DNA"/>
</dbReference>
<dbReference type="SMR" id="Q95270"/>
<dbReference type="GlyCosmos" id="Q95270">
    <property type="glycosylation" value="2 sites, No reported glycans"/>
</dbReference>
<dbReference type="Proteomes" id="UP000694411">
    <property type="component" value="Unplaced"/>
</dbReference>
<dbReference type="GO" id="GO:0005794">
    <property type="term" value="C:Golgi apparatus"/>
    <property type="evidence" value="ECO:0007669"/>
    <property type="project" value="UniProtKB-SubCell"/>
</dbReference>
<dbReference type="GO" id="GO:0005886">
    <property type="term" value="C:plasma membrane"/>
    <property type="evidence" value="ECO:0007669"/>
    <property type="project" value="UniProtKB-SubCell"/>
</dbReference>
<dbReference type="GO" id="GO:0098552">
    <property type="term" value="C:side of membrane"/>
    <property type="evidence" value="ECO:0007669"/>
    <property type="project" value="UniProtKB-KW"/>
</dbReference>
<dbReference type="GO" id="GO:0005507">
    <property type="term" value="F:copper ion binding"/>
    <property type="evidence" value="ECO:0000250"/>
    <property type="project" value="UniProtKB"/>
</dbReference>
<dbReference type="GO" id="GO:0051260">
    <property type="term" value="P:protein homooligomerization"/>
    <property type="evidence" value="ECO:0007669"/>
    <property type="project" value="InterPro"/>
</dbReference>
<dbReference type="FunFam" id="1.10.790.10:FF:000001">
    <property type="entry name" value="Major prion protein"/>
    <property type="match status" value="1"/>
</dbReference>
<dbReference type="Gene3D" id="1.10.790.10">
    <property type="entry name" value="Prion/Doppel protein, beta-ribbon domain"/>
    <property type="match status" value="1"/>
</dbReference>
<dbReference type="InterPro" id="IPR000817">
    <property type="entry name" value="Prion"/>
</dbReference>
<dbReference type="InterPro" id="IPR036924">
    <property type="entry name" value="Prion/Doppel_b-ribbon_dom_sf"/>
</dbReference>
<dbReference type="InterPro" id="IPR022416">
    <property type="entry name" value="Prion/Doppel_prot_b-ribbon_dom"/>
</dbReference>
<dbReference type="InterPro" id="IPR020949">
    <property type="entry name" value="Prion_copper_b_octapeptide"/>
</dbReference>
<dbReference type="InterPro" id="IPR025860">
    <property type="entry name" value="Prion_N"/>
</dbReference>
<dbReference type="PANTHER" id="PTHR15506">
    <property type="entry name" value="DOPPEL PRION"/>
    <property type="match status" value="1"/>
</dbReference>
<dbReference type="PANTHER" id="PTHR15506:SF2">
    <property type="entry name" value="MAJOR PRION PROTEIN"/>
    <property type="match status" value="1"/>
</dbReference>
<dbReference type="Pfam" id="PF00377">
    <property type="entry name" value="Prion"/>
    <property type="match status" value="1"/>
</dbReference>
<dbReference type="Pfam" id="PF11587">
    <property type="entry name" value="Prion_bPrPp"/>
    <property type="match status" value="1"/>
</dbReference>
<dbReference type="Pfam" id="PF03991">
    <property type="entry name" value="Prion_octapep"/>
    <property type="match status" value="1"/>
</dbReference>
<dbReference type="PRINTS" id="PR00341">
    <property type="entry name" value="PRION"/>
</dbReference>
<dbReference type="SMART" id="SM00157">
    <property type="entry name" value="PRP"/>
    <property type="match status" value="1"/>
</dbReference>
<dbReference type="SUPFAM" id="SSF54098">
    <property type="entry name" value="Prion-like"/>
    <property type="match status" value="1"/>
</dbReference>
<dbReference type="PROSITE" id="PS00291">
    <property type="entry name" value="PRION_1"/>
    <property type="match status" value="1"/>
</dbReference>
<dbReference type="PROSITE" id="PS00706">
    <property type="entry name" value="PRION_2"/>
    <property type="match status" value="1"/>
</dbReference>
<accession>Q95270</accession>
<gene>
    <name type="primary">PRNP</name>
    <name type="synonym">PRP</name>
</gene>
<comment type="function">
    <text evidence="2 4">Its primary physiological function is unclear. Has cytoprotective activity against internal or environmental stresses. May play a role in neuronal development and synaptic plasticity. May be required for neuronal myelin sheath maintenance. May play a role in iron uptake and iron homeostasis. Soluble oligomers are toxic to cultured neuroblastoma cells and induce apoptosis (in vitro). Association with GPC1 (via its heparan sulfate chains) targets PRNP to lipid rafts. Also provides Cu(2+) or Zn(2+) for the ascorbate-mediated GPC1 deaminase degradation of its heparan sulfate side chains (By similarity).</text>
</comment>
<comment type="subunit">
    <text evidence="2 4">Monomer and homodimer. Has a tendency to aggregate into amyloid fibrils containing a cross-beta spine, formed by a steric zipper of superposed beta-strands. Soluble oligomers may represent an intermediate stage on the path to fibril formation. Copper binding may promote oligomerization. Interacts with GRB2, APP, ERI3/PRNPIP and SYN1. Mislocalized cytosolically exposed PrP interacts with MGRN1; this interaction alters MGRN1 subcellular location and causes lysosomal enlargement. Interacts with KIAA1191.</text>
</comment>
<comment type="subcellular location">
    <subcellularLocation>
        <location evidence="2">Cell membrane</location>
        <topology evidence="2">Lipid-anchor</topology>
        <topology evidence="2">GPI-anchor</topology>
    </subcellularLocation>
    <subcellularLocation>
        <location evidence="4">Golgi apparatus</location>
    </subcellularLocation>
    <text evidence="2">Targeted to lipid rafts via association with the heparan sulfate chains of GPC1. Colocates, in the presence of Cu(2+), to vesicles in para- and perinuclear regions, where both proteins undergo internalization. Heparin displaces PRNP from lipid rafts and promotes endocytosis.</text>
</comment>
<comment type="domain">
    <text evidence="2">The normal, monomeric form has a mainly alpha-helical structure. The disease-associated, protease-resistant form forms amyloid fibrils containing a cross-beta spine, formed by a steric zipper of superposed beta-strands. Disease mutations may favor intermolecular contacts via short beta strands, and may thereby trigger oligomerization.</text>
</comment>
<comment type="domain">
    <text evidence="2">Contains an N-terminal region composed of octamer repeats. At low copper concentrations, the sidechains of His residues from three or four repeats contribute to the binding of a single copper ion. Alternatively, a copper ion can be bound by interaction with the sidechain and backbone amide nitrogen of a single His residue. The observed copper binding stoichiometry suggests that two repeat regions cooperate to stabilize the binding of a single copper ion. At higher copper concentrations, each octamer can bind one copper ion by interactions with the His sidechain and Gly backbone atoms. A mixture of binding types may occur, especially in the case of octamer repeat expansion. Copper binding may stabilize the conformation of this region and may promote oligomerization.</text>
</comment>
<comment type="disease">
    <text evidence="7">Found in high quantity in the brain of humans and animals infected with degenerative neurological diseases such as kuru, Creutzfeldt-Jakob disease (CJD), Gerstmann-Straussler syndrome (GSS), scrapie, bovine spongiform encephalopathy (BSE), transmissible mink encephalopathy (TME), etc.</text>
</comment>
<comment type="similarity">
    <text evidence="7">Belongs to the prion family.</text>
</comment>
<feature type="signal peptide" evidence="1">
    <location>
        <begin position="1" status="less than"/>
        <end position="15"/>
    </location>
</feature>
<feature type="chain" id="PRO_0000025731" description="Major prion protein">
    <location>
        <begin position="16"/>
        <end position="215"/>
    </location>
</feature>
<feature type="propeptide" id="PRO_0000025732" description="Removed in mature form" evidence="1">
    <location>
        <begin position="216"/>
        <end position="238" status="greater than"/>
    </location>
</feature>
<feature type="repeat" description="1">
    <location>
        <begin position="44"/>
        <end position="52"/>
    </location>
</feature>
<feature type="repeat" description="2">
    <location>
        <begin position="53"/>
        <end position="60"/>
    </location>
</feature>
<feature type="repeat" description="3">
    <location>
        <begin position="61"/>
        <end position="68"/>
    </location>
</feature>
<feature type="repeat" description="4">
    <location>
        <begin position="69"/>
        <end position="76"/>
    </location>
</feature>
<feature type="region of interest" description="Interaction with GRB2, ERI3 and SYN1" evidence="4">
    <location>
        <begin position="16"/>
        <end position="215"/>
    </location>
</feature>
<feature type="region of interest" description="Disordered" evidence="6">
    <location>
        <begin position="18"/>
        <end position="93"/>
    </location>
</feature>
<feature type="region of interest" description="4 X 8 AA tandem repeats of P-H-G-G-G-W-G-Q">
    <location>
        <begin position="44"/>
        <end position="83"/>
    </location>
</feature>
<feature type="compositionally biased region" description="Gly residues" evidence="6">
    <location>
        <begin position="45"/>
        <end position="80"/>
    </location>
</feature>
<feature type="compositionally biased region" description="Basic residues" evidence="6">
    <location>
        <begin position="83"/>
        <end position="93"/>
    </location>
</feature>
<feature type="binding site" evidence="2">
    <location>
        <position position="47"/>
    </location>
    <ligand>
        <name>Cu(2+)</name>
        <dbReference type="ChEBI" id="CHEBI:29036"/>
        <label>1</label>
    </ligand>
</feature>
<feature type="binding site" evidence="2">
    <location>
        <position position="48"/>
    </location>
    <ligand>
        <name>Cu(2+)</name>
        <dbReference type="ChEBI" id="CHEBI:29036"/>
        <label>1</label>
    </ligand>
</feature>
<feature type="binding site" evidence="2">
    <location>
        <position position="54"/>
    </location>
    <ligand>
        <name>Cu(2+)</name>
        <dbReference type="ChEBI" id="CHEBI:29036"/>
        <label>2</label>
    </ligand>
</feature>
<feature type="binding site" evidence="2">
    <location>
        <position position="55"/>
    </location>
    <ligand>
        <name>Cu(2+)</name>
        <dbReference type="ChEBI" id="CHEBI:29036"/>
        <label>2</label>
    </ligand>
</feature>
<feature type="binding site" evidence="2">
    <location>
        <position position="56"/>
    </location>
    <ligand>
        <name>Cu(2+)</name>
        <dbReference type="ChEBI" id="CHEBI:29036"/>
        <label>2</label>
    </ligand>
</feature>
<feature type="binding site" evidence="2">
    <location>
        <position position="62"/>
    </location>
    <ligand>
        <name>Cu(2+)</name>
        <dbReference type="ChEBI" id="CHEBI:29036"/>
        <label>3</label>
    </ligand>
</feature>
<feature type="binding site" evidence="2">
    <location>
        <position position="63"/>
    </location>
    <ligand>
        <name>Cu(2+)</name>
        <dbReference type="ChEBI" id="CHEBI:29036"/>
        <label>3</label>
    </ligand>
</feature>
<feature type="binding site" evidence="2">
    <location>
        <position position="64"/>
    </location>
    <ligand>
        <name>Cu(2+)</name>
        <dbReference type="ChEBI" id="CHEBI:29036"/>
        <label>3</label>
    </ligand>
</feature>
<feature type="binding site" evidence="2">
    <location>
        <position position="70"/>
    </location>
    <ligand>
        <name>Cu(2+)</name>
        <dbReference type="ChEBI" id="CHEBI:29036"/>
        <label>4</label>
    </ligand>
</feature>
<feature type="binding site" evidence="2">
    <location>
        <position position="71"/>
    </location>
    <ligand>
        <name>Cu(2+)</name>
        <dbReference type="ChEBI" id="CHEBI:29036"/>
        <label>4</label>
    </ligand>
</feature>
<feature type="binding site" evidence="2">
    <location>
        <position position="72"/>
    </location>
    <ligand>
        <name>Cu(2+)</name>
        <dbReference type="ChEBI" id="CHEBI:29036"/>
        <label>4</label>
    </ligand>
</feature>
<feature type="lipid moiety-binding region" description="GPI-anchor amidated serine" evidence="3">
    <location>
        <position position="215"/>
    </location>
</feature>
<feature type="glycosylation site" description="N-linked (GlcNAc...) asparagine" evidence="5">
    <location>
        <position position="166"/>
    </location>
</feature>
<feature type="glycosylation site" description="N-linked (GlcNAc...) asparagine" evidence="5">
    <location>
        <position position="182"/>
    </location>
</feature>
<feature type="disulfide bond" evidence="3">
    <location>
        <begin position="164"/>
        <end position="199"/>
    </location>
</feature>
<feature type="non-terminal residue">
    <location>
        <position position="1"/>
    </location>
</feature>
<feature type="non-terminal residue">
    <location>
        <position position="238"/>
    </location>
</feature>
<reference key="1">
    <citation type="submission" date="1996-11" db="EMBL/GenBank/DDBJ databases">
        <title>Evidence for an increased substitution rate of the hominoid prion protein gene during the period of brain expansion.</title>
        <authorList>
            <person name="van der Kuyl A.C."/>
            <person name="Dekker J.T."/>
            <person name="Goudsmit J."/>
        </authorList>
    </citation>
    <scope>NUCLEOTIDE SEQUENCE [GENOMIC DNA]</scope>
</reference>
<evidence type="ECO:0000250" key="1"/>
<evidence type="ECO:0000250" key="2">
    <source>
        <dbReference type="UniProtKB" id="P04156"/>
    </source>
</evidence>
<evidence type="ECO:0000250" key="3">
    <source>
        <dbReference type="UniProtKB" id="P04273"/>
    </source>
</evidence>
<evidence type="ECO:0000250" key="4">
    <source>
        <dbReference type="UniProtKB" id="P04925"/>
    </source>
</evidence>
<evidence type="ECO:0000255" key="5"/>
<evidence type="ECO:0000256" key="6">
    <source>
        <dbReference type="SAM" id="MobiDB-lite"/>
    </source>
</evidence>
<evidence type="ECO:0000305" key="7"/>